<evidence type="ECO:0000250" key="1"/>
<evidence type="ECO:0000305" key="2"/>
<dbReference type="EMBL" id="AE014296">
    <property type="protein sequence ID" value="AAF50596.1"/>
    <property type="molecule type" value="Genomic_DNA"/>
</dbReference>
<dbReference type="EMBL" id="AY113554">
    <property type="protein sequence ID" value="AAM29559.1"/>
    <property type="molecule type" value="mRNA"/>
</dbReference>
<dbReference type="EMBL" id="BT030448">
    <property type="protein sequence ID" value="ABP87890.1"/>
    <property type="molecule type" value="mRNA"/>
</dbReference>
<dbReference type="RefSeq" id="NP_001261501.1">
    <property type="nucleotide sequence ID" value="NM_001274572.1"/>
</dbReference>
<dbReference type="RefSeq" id="NP_001286966.1">
    <property type="nucleotide sequence ID" value="NM_001300037.1"/>
</dbReference>
<dbReference type="RefSeq" id="NP_648091.1">
    <property type="nucleotide sequence ID" value="NM_139834.3"/>
</dbReference>
<dbReference type="PDB" id="4V6W">
    <property type="method" value="EM"/>
    <property type="resolution" value="6.00 A"/>
    <property type="chains" value="CQ=1-188"/>
</dbReference>
<dbReference type="PDB" id="6XU6">
    <property type="method" value="EM"/>
    <property type="resolution" value="3.50 A"/>
    <property type="chains" value="CQ=2-188"/>
</dbReference>
<dbReference type="PDB" id="6XU7">
    <property type="method" value="EM"/>
    <property type="resolution" value="4.90 A"/>
    <property type="chains" value="CQ=2-188"/>
</dbReference>
<dbReference type="PDB" id="6XU8">
    <property type="method" value="EM"/>
    <property type="resolution" value="3.00 A"/>
    <property type="chains" value="CQ=2-188"/>
</dbReference>
<dbReference type="PDBsum" id="4V6W"/>
<dbReference type="PDBsum" id="6XU6"/>
<dbReference type="PDBsum" id="6XU7"/>
<dbReference type="PDBsum" id="6XU8"/>
<dbReference type="EMDB" id="EMD-10622"/>
<dbReference type="EMDB" id="EMD-10623"/>
<dbReference type="EMDB" id="EMD-10624"/>
<dbReference type="SMR" id="Q9VS34"/>
<dbReference type="BioGRID" id="64237">
    <property type="interactions" value="105"/>
</dbReference>
<dbReference type="FunCoup" id="Q9VS34">
    <property type="interactions" value="1430"/>
</dbReference>
<dbReference type="IntAct" id="Q9VS34">
    <property type="interactions" value="13"/>
</dbReference>
<dbReference type="MINT" id="Q9VS34"/>
<dbReference type="STRING" id="7227.FBpp0305562"/>
<dbReference type="PaxDb" id="7227-FBpp0076602"/>
<dbReference type="DNASU" id="38794"/>
<dbReference type="EnsemblMetazoa" id="FBtr0076892">
    <property type="protein sequence ID" value="FBpp0076602"/>
    <property type="gene ID" value="FBgn0035753"/>
</dbReference>
<dbReference type="EnsemblMetazoa" id="FBtr0333370">
    <property type="protein sequence ID" value="FBpp0305562"/>
    <property type="gene ID" value="FBgn0035753"/>
</dbReference>
<dbReference type="EnsemblMetazoa" id="FBtr0345036">
    <property type="protein sequence ID" value="FBpp0311286"/>
    <property type="gene ID" value="FBgn0035753"/>
</dbReference>
<dbReference type="GeneID" id="38794"/>
<dbReference type="KEGG" id="dme:Dmel_CG8615"/>
<dbReference type="AGR" id="FB:FBgn0035753"/>
<dbReference type="CTD" id="6141"/>
<dbReference type="FlyBase" id="FBgn0035753">
    <property type="gene designation" value="RpL18"/>
</dbReference>
<dbReference type="VEuPathDB" id="VectorBase:FBgn0035753"/>
<dbReference type="eggNOG" id="KOG1714">
    <property type="taxonomic scope" value="Eukaryota"/>
</dbReference>
<dbReference type="GeneTree" id="ENSGT00390000012976"/>
<dbReference type="HOGENOM" id="CLU_080024_0_0_1"/>
<dbReference type="InParanoid" id="Q9VS34"/>
<dbReference type="OMA" id="IDICHKN"/>
<dbReference type="OrthoDB" id="6353017at2759"/>
<dbReference type="PhylomeDB" id="Q9VS34"/>
<dbReference type="Reactome" id="R-DME-156827">
    <property type="pathway name" value="L13a-mediated translational silencing of Ceruloplasmin expression"/>
</dbReference>
<dbReference type="Reactome" id="R-DME-1799339">
    <property type="pathway name" value="SRP-dependent cotranslational protein targeting to membrane"/>
</dbReference>
<dbReference type="Reactome" id="R-DME-72689">
    <property type="pathway name" value="Formation of a pool of free 40S subunits"/>
</dbReference>
<dbReference type="Reactome" id="R-DME-72706">
    <property type="pathway name" value="GTP hydrolysis and joining of the 60S ribosomal subunit"/>
</dbReference>
<dbReference type="Reactome" id="R-DME-975956">
    <property type="pathway name" value="Nonsense Mediated Decay (NMD) independent of the Exon Junction Complex (EJC)"/>
</dbReference>
<dbReference type="Reactome" id="R-DME-975957">
    <property type="pathway name" value="Nonsense Mediated Decay (NMD) enhanced by the Exon Junction Complex (EJC)"/>
</dbReference>
<dbReference type="SignaLink" id="Q9VS34"/>
<dbReference type="BioGRID-ORCS" id="38794">
    <property type="hits" value="0 hits in 1 CRISPR screen"/>
</dbReference>
<dbReference type="ChiTaRS" id="RpL18">
    <property type="organism name" value="fly"/>
</dbReference>
<dbReference type="GenomeRNAi" id="38794"/>
<dbReference type="PRO" id="PR:Q9VS34"/>
<dbReference type="Proteomes" id="UP000000803">
    <property type="component" value="Chromosome 3L"/>
</dbReference>
<dbReference type="Bgee" id="FBgn0035753">
    <property type="expression patterns" value="Expressed in egg cell and 291 other cell types or tissues"/>
</dbReference>
<dbReference type="ExpressionAtlas" id="Q9VS34">
    <property type="expression patterns" value="baseline and differential"/>
</dbReference>
<dbReference type="GO" id="GO:0022625">
    <property type="term" value="C:cytosolic large ribosomal subunit"/>
    <property type="evidence" value="ECO:0000318"/>
    <property type="project" value="GO_Central"/>
</dbReference>
<dbReference type="GO" id="GO:0022626">
    <property type="term" value="C:cytosolic ribosome"/>
    <property type="evidence" value="ECO:0000314"/>
    <property type="project" value="FlyBase"/>
</dbReference>
<dbReference type="GO" id="GO:0003723">
    <property type="term" value="F:RNA binding"/>
    <property type="evidence" value="ECO:0000318"/>
    <property type="project" value="GO_Central"/>
</dbReference>
<dbReference type="GO" id="GO:0003735">
    <property type="term" value="F:structural constituent of ribosome"/>
    <property type="evidence" value="ECO:0000314"/>
    <property type="project" value="FlyBase"/>
</dbReference>
<dbReference type="GO" id="GO:0002181">
    <property type="term" value="P:cytoplasmic translation"/>
    <property type="evidence" value="ECO:0000304"/>
    <property type="project" value="FlyBase"/>
</dbReference>
<dbReference type="FunFam" id="3.100.10.10:FF:000001">
    <property type="entry name" value="60S ribosomal protein L18"/>
    <property type="match status" value="1"/>
</dbReference>
<dbReference type="Gene3D" id="3.100.10.10">
    <property type="match status" value="1"/>
</dbReference>
<dbReference type="InterPro" id="IPR000039">
    <property type="entry name" value="Ribosomal_eL18"/>
</dbReference>
<dbReference type="InterPro" id="IPR021132">
    <property type="entry name" value="Ribosomal_eL18/eL18-A/B/_CS"/>
</dbReference>
<dbReference type="InterPro" id="IPR021131">
    <property type="entry name" value="Ribosomal_uL15/eL18"/>
</dbReference>
<dbReference type="InterPro" id="IPR036227">
    <property type="entry name" value="Ribosomal_uL15/eL18_sf"/>
</dbReference>
<dbReference type="PANTHER" id="PTHR10934">
    <property type="entry name" value="60S RIBOSOMAL PROTEIN L18"/>
    <property type="match status" value="1"/>
</dbReference>
<dbReference type="PANTHER" id="PTHR10934:SF2">
    <property type="entry name" value="LARGE RIBOSOMAL SUBUNIT PROTEIN EL18"/>
    <property type="match status" value="1"/>
</dbReference>
<dbReference type="Pfam" id="PF17135">
    <property type="entry name" value="Ribosomal_L18"/>
    <property type="match status" value="1"/>
</dbReference>
<dbReference type="SUPFAM" id="SSF52080">
    <property type="entry name" value="Ribosomal proteins L15p and L18e"/>
    <property type="match status" value="1"/>
</dbReference>
<dbReference type="PROSITE" id="PS01106">
    <property type="entry name" value="RIBOSOMAL_L18E"/>
    <property type="match status" value="1"/>
</dbReference>
<protein>
    <recommendedName>
        <fullName evidence="2">Large ribosomal subunit protein eL18</fullName>
    </recommendedName>
    <alternativeName>
        <fullName>60S ribosomal protein L18</fullName>
    </alternativeName>
</protein>
<keyword id="KW-0002">3D-structure</keyword>
<keyword id="KW-0963">Cytoplasm</keyword>
<keyword id="KW-1185">Reference proteome</keyword>
<keyword id="KW-0687">Ribonucleoprotein</keyword>
<keyword id="KW-0689">Ribosomal protein</keyword>
<reference key="1">
    <citation type="journal article" date="2000" name="Science">
        <title>The genome sequence of Drosophila melanogaster.</title>
        <authorList>
            <person name="Adams M.D."/>
            <person name="Celniker S.E."/>
            <person name="Holt R.A."/>
            <person name="Evans C.A."/>
            <person name="Gocayne J.D."/>
            <person name="Amanatides P.G."/>
            <person name="Scherer S.E."/>
            <person name="Li P.W."/>
            <person name="Hoskins R.A."/>
            <person name="Galle R.F."/>
            <person name="George R.A."/>
            <person name="Lewis S.E."/>
            <person name="Richards S."/>
            <person name="Ashburner M."/>
            <person name="Henderson S.N."/>
            <person name="Sutton G.G."/>
            <person name="Wortman J.R."/>
            <person name="Yandell M.D."/>
            <person name="Zhang Q."/>
            <person name="Chen L.X."/>
            <person name="Brandon R.C."/>
            <person name="Rogers Y.-H.C."/>
            <person name="Blazej R.G."/>
            <person name="Champe M."/>
            <person name="Pfeiffer B.D."/>
            <person name="Wan K.H."/>
            <person name="Doyle C."/>
            <person name="Baxter E.G."/>
            <person name="Helt G."/>
            <person name="Nelson C.R."/>
            <person name="Miklos G.L.G."/>
            <person name="Abril J.F."/>
            <person name="Agbayani A."/>
            <person name="An H.-J."/>
            <person name="Andrews-Pfannkoch C."/>
            <person name="Baldwin D."/>
            <person name="Ballew R.M."/>
            <person name="Basu A."/>
            <person name="Baxendale J."/>
            <person name="Bayraktaroglu L."/>
            <person name="Beasley E.M."/>
            <person name="Beeson K.Y."/>
            <person name="Benos P.V."/>
            <person name="Berman B.P."/>
            <person name="Bhandari D."/>
            <person name="Bolshakov S."/>
            <person name="Borkova D."/>
            <person name="Botchan M.R."/>
            <person name="Bouck J."/>
            <person name="Brokstein P."/>
            <person name="Brottier P."/>
            <person name="Burtis K.C."/>
            <person name="Busam D.A."/>
            <person name="Butler H."/>
            <person name="Cadieu E."/>
            <person name="Center A."/>
            <person name="Chandra I."/>
            <person name="Cherry J.M."/>
            <person name="Cawley S."/>
            <person name="Dahlke C."/>
            <person name="Davenport L.B."/>
            <person name="Davies P."/>
            <person name="de Pablos B."/>
            <person name="Delcher A."/>
            <person name="Deng Z."/>
            <person name="Mays A.D."/>
            <person name="Dew I."/>
            <person name="Dietz S.M."/>
            <person name="Dodson K."/>
            <person name="Doup L.E."/>
            <person name="Downes M."/>
            <person name="Dugan-Rocha S."/>
            <person name="Dunkov B.C."/>
            <person name="Dunn P."/>
            <person name="Durbin K.J."/>
            <person name="Evangelista C.C."/>
            <person name="Ferraz C."/>
            <person name="Ferriera S."/>
            <person name="Fleischmann W."/>
            <person name="Fosler C."/>
            <person name="Gabrielian A.E."/>
            <person name="Garg N.S."/>
            <person name="Gelbart W.M."/>
            <person name="Glasser K."/>
            <person name="Glodek A."/>
            <person name="Gong F."/>
            <person name="Gorrell J.H."/>
            <person name="Gu Z."/>
            <person name="Guan P."/>
            <person name="Harris M."/>
            <person name="Harris N.L."/>
            <person name="Harvey D.A."/>
            <person name="Heiman T.J."/>
            <person name="Hernandez J.R."/>
            <person name="Houck J."/>
            <person name="Hostin D."/>
            <person name="Houston K.A."/>
            <person name="Howland T.J."/>
            <person name="Wei M.-H."/>
            <person name="Ibegwam C."/>
            <person name="Jalali M."/>
            <person name="Kalush F."/>
            <person name="Karpen G.H."/>
            <person name="Ke Z."/>
            <person name="Kennison J.A."/>
            <person name="Ketchum K.A."/>
            <person name="Kimmel B.E."/>
            <person name="Kodira C.D."/>
            <person name="Kraft C.L."/>
            <person name="Kravitz S."/>
            <person name="Kulp D."/>
            <person name="Lai Z."/>
            <person name="Lasko P."/>
            <person name="Lei Y."/>
            <person name="Levitsky A.A."/>
            <person name="Li J.H."/>
            <person name="Li Z."/>
            <person name="Liang Y."/>
            <person name="Lin X."/>
            <person name="Liu X."/>
            <person name="Mattei B."/>
            <person name="McIntosh T.C."/>
            <person name="McLeod M.P."/>
            <person name="McPherson D."/>
            <person name="Merkulov G."/>
            <person name="Milshina N.V."/>
            <person name="Mobarry C."/>
            <person name="Morris J."/>
            <person name="Moshrefi A."/>
            <person name="Mount S.M."/>
            <person name="Moy M."/>
            <person name="Murphy B."/>
            <person name="Murphy L."/>
            <person name="Muzny D.M."/>
            <person name="Nelson D.L."/>
            <person name="Nelson D.R."/>
            <person name="Nelson K.A."/>
            <person name="Nixon K."/>
            <person name="Nusskern D.R."/>
            <person name="Pacleb J.M."/>
            <person name="Palazzolo M."/>
            <person name="Pittman G.S."/>
            <person name="Pan S."/>
            <person name="Pollard J."/>
            <person name="Puri V."/>
            <person name="Reese M.G."/>
            <person name="Reinert K."/>
            <person name="Remington K."/>
            <person name="Saunders R.D.C."/>
            <person name="Scheeler F."/>
            <person name="Shen H."/>
            <person name="Shue B.C."/>
            <person name="Siden-Kiamos I."/>
            <person name="Simpson M."/>
            <person name="Skupski M.P."/>
            <person name="Smith T.J."/>
            <person name="Spier E."/>
            <person name="Spradling A.C."/>
            <person name="Stapleton M."/>
            <person name="Strong R."/>
            <person name="Sun E."/>
            <person name="Svirskas R."/>
            <person name="Tector C."/>
            <person name="Turner R."/>
            <person name="Venter E."/>
            <person name="Wang A.H."/>
            <person name="Wang X."/>
            <person name="Wang Z.-Y."/>
            <person name="Wassarman D.A."/>
            <person name="Weinstock G.M."/>
            <person name="Weissenbach J."/>
            <person name="Williams S.M."/>
            <person name="Woodage T."/>
            <person name="Worley K.C."/>
            <person name="Wu D."/>
            <person name="Yang S."/>
            <person name="Yao Q.A."/>
            <person name="Ye J."/>
            <person name="Yeh R.-F."/>
            <person name="Zaveri J.S."/>
            <person name="Zhan M."/>
            <person name="Zhang G."/>
            <person name="Zhao Q."/>
            <person name="Zheng L."/>
            <person name="Zheng X.H."/>
            <person name="Zhong F.N."/>
            <person name="Zhong W."/>
            <person name="Zhou X."/>
            <person name="Zhu S.C."/>
            <person name="Zhu X."/>
            <person name="Smith H.O."/>
            <person name="Gibbs R.A."/>
            <person name="Myers E.W."/>
            <person name="Rubin G.M."/>
            <person name="Venter J.C."/>
        </authorList>
    </citation>
    <scope>NUCLEOTIDE SEQUENCE [LARGE SCALE GENOMIC DNA]</scope>
    <source>
        <strain>Berkeley</strain>
    </source>
</reference>
<reference key="2">
    <citation type="journal article" date="2002" name="Genome Biol.">
        <title>Annotation of the Drosophila melanogaster euchromatic genome: a systematic review.</title>
        <authorList>
            <person name="Misra S."/>
            <person name="Crosby M.A."/>
            <person name="Mungall C.J."/>
            <person name="Matthews B.B."/>
            <person name="Campbell K.S."/>
            <person name="Hradecky P."/>
            <person name="Huang Y."/>
            <person name="Kaminker J.S."/>
            <person name="Millburn G.H."/>
            <person name="Prochnik S.E."/>
            <person name="Smith C.D."/>
            <person name="Tupy J.L."/>
            <person name="Whitfield E.J."/>
            <person name="Bayraktaroglu L."/>
            <person name="Berman B.P."/>
            <person name="Bettencourt B.R."/>
            <person name="Celniker S.E."/>
            <person name="de Grey A.D.N.J."/>
            <person name="Drysdale R.A."/>
            <person name="Harris N.L."/>
            <person name="Richter J."/>
            <person name="Russo S."/>
            <person name="Schroeder A.J."/>
            <person name="Shu S.Q."/>
            <person name="Stapleton M."/>
            <person name="Yamada C."/>
            <person name="Ashburner M."/>
            <person name="Gelbart W.M."/>
            <person name="Rubin G.M."/>
            <person name="Lewis S.E."/>
        </authorList>
    </citation>
    <scope>GENOME REANNOTATION</scope>
    <source>
        <strain>Berkeley</strain>
    </source>
</reference>
<reference key="3">
    <citation type="journal article" date="2002" name="Genome Biol.">
        <title>A Drosophila full-length cDNA resource.</title>
        <authorList>
            <person name="Stapleton M."/>
            <person name="Carlson J.W."/>
            <person name="Brokstein P."/>
            <person name="Yu C."/>
            <person name="Champe M."/>
            <person name="George R.A."/>
            <person name="Guarin H."/>
            <person name="Kronmiller B."/>
            <person name="Pacleb J.M."/>
            <person name="Park S."/>
            <person name="Wan K.H."/>
            <person name="Rubin G.M."/>
            <person name="Celniker S.E."/>
        </authorList>
    </citation>
    <scope>NUCLEOTIDE SEQUENCE [LARGE SCALE MRNA]</scope>
    <source>
        <strain>Berkeley</strain>
        <tissue>Head</tissue>
    </source>
</reference>
<reference key="4">
    <citation type="submission" date="2007-04" db="EMBL/GenBank/DDBJ databases">
        <authorList>
            <person name="Stapleton M."/>
            <person name="Carlson J.W."/>
            <person name="Frise E."/>
            <person name="Kapadia B."/>
            <person name="Park S."/>
            <person name="Wan K.H."/>
            <person name="Yu C."/>
            <person name="Celniker S.E."/>
        </authorList>
    </citation>
    <scope>NUCLEOTIDE SEQUENCE [LARGE SCALE MRNA]</scope>
    <source>
        <strain>Berkeley</strain>
    </source>
</reference>
<reference key="5">
    <citation type="journal article" date="2013" name="Nature">
        <title>Structures of the human and Drosophila 80S ribosome.</title>
        <authorList>
            <person name="Anger A.M."/>
            <person name="Armache J.P."/>
            <person name="Berninghausen O."/>
            <person name="Habeck M."/>
            <person name="Subklewe M."/>
            <person name="Wilson D.N."/>
            <person name="Beckmann R."/>
        </authorList>
    </citation>
    <scope>STRUCTURE BY ELECTRON MICROSCOPY (6.0 ANGSTROMS) OF THE 80S RIBOSOME</scope>
</reference>
<proteinExistence type="evidence at protein level"/>
<name>RL18_DROME</name>
<comment type="subcellular location">
    <subcellularLocation>
        <location evidence="1">Cytoplasm</location>
    </subcellularLocation>
</comment>
<comment type="similarity">
    <text evidence="2">Belongs to the eukaryotic ribosomal protein eL18 family.</text>
</comment>
<accession>Q9VS34</accession>
<feature type="chain" id="PRO_0000291628" description="Large ribosomal subunit protein eL18">
    <location>
        <begin position="1"/>
        <end position="188"/>
    </location>
</feature>
<sequence>MGIDINHKYDRKVRRTEPKSQDVYLRLLVKLYRFLQRRTNKKFNRIILKRLFMSKINRPPLSLQRIARFFKAANQPESTIVVVGTVTDDARLLVVPKLTVCALHVTQTARERILKAGGEVLTFDQLALRSPTGKNTLLLQGRRTARTACKHFGKAPGVPHSHTRPYVRSKGRKFERARGRRSSCGYKK</sequence>
<gene>
    <name type="primary">RpL18</name>
    <name type="ORF">CG8615</name>
</gene>
<organism>
    <name type="scientific">Drosophila melanogaster</name>
    <name type="common">Fruit fly</name>
    <dbReference type="NCBI Taxonomy" id="7227"/>
    <lineage>
        <taxon>Eukaryota</taxon>
        <taxon>Metazoa</taxon>
        <taxon>Ecdysozoa</taxon>
        <taxon>Arthropoda</taxon>
        <taxon>Hexapoda</taxon>
        <taxon>Insecta</taxon>
        <taxon>Pterygota</taxon>
        <taxon>Neoptera</taxon>
        <taxon>Endopterygota</taxon>
        <taxon>Diptera</taxon>
        <taxon>Brachycera</taxon>
        <taxon>Muscomorpha</taxon>
        <taxon>Ephydroidea</taxon>
        <taxon>Drosophilidae</taxon>
        <taxon>Drosophila</taxon>
        <taxon>Sophophora</taxon>
    </lineage>
</organism>